<accession>P9WKW4</accession>
<accession>L0TDX7</accession>
<accession>P96243</accession>
<accession>Q7D4S2</accession>
<proteinExistence type="inferred from homology"/>
<name>Y3835_MYCTO</name>
<feature type="chain" id="PRO_0000427583" description="Uncharacterized membrane protein MT3943">
    <location>
        <begin position="1"/>
        <end position="449"/>
    </location>
</feature>
<feature type="transmembrane region" description="Helical" evidence="2">
    <location>
        <begin position="45"/>
        <end position="65"/>
    </location>
</feature>
<feature type="region of interest" description="Disordered" evidence="3">
    <location>
        <begin position="1"/>
        <end position="33"/>
    </location>
</feature>
<feature type="region of interest" description="Disordered" evidence="3">
    <location>
        <begin position="349"/>
        <end position="449"/>
    </location>
</feature>
<feature type="compositionally biased region" description="Acidic residues" evidence="3">
    <location>
        <begin position="1"/>
        <end position="11"/>
    </location>
</feature>
<feature type="compositionally biased region" description="Pro residues" evidence="3">
    <location>
        <begin position="365"/>
        <end position="387"/>
    </location>
</feature>
<feature type="compositionally biased region" description="Low complexity" evidence="3">
    <location>
        <begin position="409"/>
        <end position="418"/>
    </location>
</feature>
<feature type="compositionally biased region" description="Pro residues" evidence="3">
    <location>
        <begin position="437"/>
        <end position="449"/>
    </location>
</feature>
<gene>
    <name type="ordered locus">MT3943</name>
</gene>
<keyword id="KW-1003">Cell membrane</keyword>
<keyword id="KW-0472">Membrane</keyword>
<keyword id="KW-1185">Reference proteome</keyword>
<keyword id="KW-0964">Secreted</keyword>
<keyword id="KW-0812">Transmembrane</keyword>
<keyword id="KW-1133">Transmembrane helix</keyword>
<evidence type="ECO:0000250" key="1"/>
<evidence type="ECO:0000255" key="2"/>
<evidence type="ECO:0000256" key="3">
    <source>
        <dbReference type="SAM" id="MobiDB-lite"/>
    </source>
</evidence>
<evidence type="ECO:0000305" key="4"/>
<reference key="1">
    <citation type="journal article" date="2002" name="J. Bacteriol.">
        <title>Whole-genome comparison of Mycobacterium tuberculosis clinical and laboratory strains.</title>
        <authorList>
            <person name="Fleischmann R.D."/>
            <person name="Alland D."/>
            <person name="Eisen J.A."/>
            <person name="Carpenter L."/>
            <person name="White O."/>
            <person name="Peterson J.D."/>
            <person name="DeBoy R.T."/>
            <person name="Dodson R.J."/>
            <person name="Gwinn M.L."/>
            <person name="Haft D.H."/>
            <person name="Hickey E.K."/>
            <person name="Kolonay J.F."/>
            <person name="Nelson W.C."/>
            <person name="Umayam L.A."/>
            <person name="Ermolaeva M.D."/>
            <person name="Salzberg S.L."/>
            <person name="Delcher A."/>
            <person name="Utterback T.R."/>
            <person name="Weidman J.F."/>
            <person name="Khouri H.M."/>
            <person name="Gill J."/>
            <person name="Mikula A."/>
            <person name="Bishai W."/>
            <person name="Jacobs W.R. Jr."/>
            <person name="Venter J.C."/>
            <person name="Fraser C.M."/>
        </authorList>
    </citation>
    <scope>NUCLEOTIDE SEQUENCE [LARGE SCALE GENOMIC DNA]</scope>
    <source>
        <strain>CDC 1551 / Oshkosh</strain>
    </source>
</reference>
<sequence length="449" mass="47043">MLDAPEQDPVDPGDPASPPHGEAEQPLPGPRWPRALRASATRRALLLTALGGLLIAGLVTAIPAVGRAPERLAGYIASNPVPSTGAKINASFNRVASGDCLMWPDGTPESAAIVSCADEHRFEVAESIDMRTFPGMEYGQNAAPPSPARIQQISEEQCEAAVRRYLGTKFDPNSKFTISMLWPGDRAWRQAGERRMLCGLQSPGPNNQQLAFKGKVADIDQSKVWPAGTCLGIDATTNQPIDVPVDCAAPHAMEVSGTVNLAERFPDALPSEPEQDGFIKDACTRMTDAYLAPLKLRTTTLTLIYPTLTLPSWSAGSRVVACSIGATLGNGGWATLVNSAKGALLINGQPPVPPPDIPEERLNLPPIPLQLPTPRPAPPAQQLPSTPPGTQHLPAQQPVVTPTRPPESHAPASAAPAETQPPPPDAGAPPATQSPEATPPGPAEPAPAG</sequence>
<organism>
    <name type="scientific">Mycobacterium tuberculosis (strain CDC 1551 / Oshkosh)</name>
    <dbReference type="NCBI Taxonomy" id="83331"/>
    <lineage>
        <taxon>Bacteria</taxon>
        <taxon>Bacillati</taxon>
        <taxon>Actinomycetota</taxon>
        <taxon>Actinomycetes</taxon>
        <taxon>Mycobacteriales</taxon>
        <taxon>Mycobacteriaceae</taxon>
        <taxon>Mycobacterium</taxon>
        <taxon>Mycobacterium tuberculosis complex</taxon>
    </lineage>
</organism>
<protein>
    <recommendedName>
        <fullName>Uncharacterized membrane protein MT3943</fullName>
    </recommendedName>
</protein>
<dbReference type="EMBL" id="AE000516">
    <property type="protein sequence ID" value="AAK48310.1"/>
    <property type="molecule type" value="Genomic_DNA"/>
</dbReference>
<dbReference type="PIR" id="H70652">
    <property type="entry name" value="H70652"/>
</dbReference>
<dbReference type="RefSeq" id="WP_003420892.1">
    <property type="nucleotide sequence ID" value="NZ_KK341227.1"/>
</dbReference>
<dbReference type="KEGG" id="mtc:MT3943"/>
<dbReference type="PATRIC" id="fig|83331.31.peg.4241"/>
<dbReference type="HOGENOM" id="CLU_037731_2_0_11"/>
<dbReference type="Proteomes" id="UP000001020">
    <property type="component" value="Chromosome"/>
</dbReference>
<dbReference type="GO" id="GO:0005576">
    <property type="term" value="C:extracellular region"/>
    <property type="evidence" value="ECO:0007669"/>
    <property type="project" value="UniProtKB-SubCell"/>
</dbReference>
<dbReference type="GO" id="GO:0005886">
    <property type="term" value="C:plasma membrane"/>
    <property type="evidence" value="ECO:0007669"/>
    <property type="project" value="UniProtKB-SubCell"/>
</dbReference>
<dbReference type="InterPro" id="IPR026004">
    <property type="entry name" value="Septum_form"/>
</dbReference>
<dbReference type="Pfam" id="PF13845">
    <property type="entry name" value="Septum_form"/>
    <property type="match status" value="1"/>
</dbReference>
<comment type="function">
    <text evidence="1">May play a role in septum formation.</text>
</comment>
<comment type="subcellular location">
    <subcellularLocation>
        <location evidence="4">Cell membrane</location>
        <topology evidence="4">Single-pass membrane protein</topology>
    </subcellularLocation>
    <subcellularLocation>
        <location evidence="1">Secreted</location>
    </subcellularLocation>
</comment>